<protein>
    <recommendedName>
        <fullName>Uncharacterized HTH-type transcriptional regulator SAV2363</fullName>
    </recommendedName>
</protein>
<name>Y2363_STAAM</name>
<reference key="1">
    <citation type="journal article" date="2001" name="Lancet">
        <title>Whole genome sequencing of meticillin-resistant Staphylococcus aureus.</title>
        <authorList>
            <person name="Kuroda M."/>
            <person name="Ohta T."/>
            <person name="Uchiyama I."/>
            <person name="Baba T."/>
            <person name="Yuzawa H."/>
            <person name="Kobayashi I."/>
            <person name="Cui L."/>
            <person name="Oguchi A."/>
            <person name="Aoki K."/>
            <person name="Nagai Y."/>
            <person name="Lian J.-Q."/>
            <person name="Ito T."/>
            <person name="Kanamori M."/>
            <person name="Matsumaru H."/>
            <person name="Maruyama A."/>
            <person name="Murakami H."/>
            <person name="Hosoyama A."/>
            <person name="Mizutani-Ui Y."/>
            <person name="Takahashi N.K."/>
            <person name="Sawano T."/>
            <person name="Inoue R."/>
            <person name="Kaito C."/>
            <person name="Sekimizu K."/>
            <person name="Hirakawa H."/>
            <person name="Kuhara S."/>
            <person name="Goto S."/>
            <person name="Yabuzaki J."/>
            <person name="Kanehisa M."/>
            <person name="Yamashita A."/>
            <person name="Oshima K."/>
            <person name="Furuya K."/>
            <person name="Yoshino C."/>
            <person name="Shiba T."/>
            <person name="Hattori M."/>
            <person name="Ogasawara N."/>
            <person name="Hayashi H."/>
            <person name="Hiramatsu K."/>
        </authorList>
    </citation>
    <scope>NUCLEOTIDE SEQUENCE [LARGE SCALE GENOMIC DNA]</scope>
    <source>
        <strain>Mu50 / ATCC 700699</strain>
    </source>
</reference>
<accession>Q99RR4</accession>
<evidence type="ECO:0000255" key="1">
    <source>
        <dbReference type="PROSITE-ProRule" id="PRU00112"/>
    </source>
</evidence>
<evidence type="ECO:0000305" key="2"/>
<keyword id="KW-0963">Cytoplasm</keyword>
<keyword id="KW-0238">DNA-binding</keyword>
<keyword id="KW-0804">Transcription</keyword>
<keyword id="KW-0805">Transcription regulation</keyword>
<feature type="chain" id="PRO_0000298604" description="Uncharacterized HTH-type transcriptional regulator SAV2363">
    <location>
        <begin position="1"/>
        <end position="147"/>
    </location>
</feature>
<feature type="domain" description="HTH LytTR-type" evidence="1">
    <location>
        <begin position="44"/>
        <end position="147"/>
    </location>
</feature>
<sequence>MMKLNLFINANETESYIDIHAPKMNDHVQSIINAVNDLDKSHTLVGYIDKEIHIINVSDVITFQVINKNVTAITSNQKFKLKLRLYELEKQLPQHFIRISKSEIVNKYYIEKLLLEPNGLIRMYLKDAHYTYSSRRYLKSIKERLSI</sequence>
<organism>
    <name type="scientific">Staphylococcus aureus (strain Mu50 / ATCC 700699)</name>
    <dbReference type="NCBI Taxonomy" id="158878"/>
    <lineage>
        <taxon>Bacteria</taxon>
        <taxon>Bacillati</taxon>
        <taxon>Bacillota</taxon>
        <taxon>Bacilli</taxon>
        <taxon>Bacillales</taxon>
        <taxon>Staphylococcaceae</taxon>
        <taxon>Staphylococcus</taxon>
    </lineage>
</organism>
<dbReference type="EMBL" id="BA000017">
    <property type="protein sequence ID" value="BAB58525.1"/>
    <property type="molecule type" value="Genomic_DNA"/>
</dbReference>
<dbReference type="RefSeq" id="WP_000977032.1">
    <property type="nucleotide sequence ID" value="NC_002758.2"/>
</dbReference>
<dbReference type="SMR" id="Q99RR4"/>
<dbReference type="KEGG" id="sav:SAV2363"/>
<dbReference type="HOGENOM" id="CLU_106729_4_0_9"/>
<dbReference type="PhylomeDB" id="Q99RR4"/>
<dbReference type="Proteomes" id="UP000002481">
    <property type="component" value="Chromosome"/>
</dbReference>
<dbReference type="GO" id="GO:0005737">
    <property type="term" value="C:cytoplasm"/>
    <property type="evidence" value="ECO:0007669"/>
    <property type="project" value="UniProtKB-SubCell"/>
</dbReference>
<dbReference type="GO" id="GO:0003677">
    <property type="term" value="F:DNA binding"/>
    <property type="evidence" value="ECO:0007669"/>
    <property type="project" value="UniProtKB-KW"/>
</dbReference>
<dbReference type="GO" id="GO:0000156">
    <property type="term" value="F:phosphorelay response regulator activity"/>
    <property type="evidence" value="ECO:0007669"/>
    <property type="project" value="InterPro"/>
</dbReference>
<dbReference type="Gene3D" id="2.40.50.1020">
    <property type="entry name" value="LytTr DNA-binding domain"/>
    <property type="match status" value="1"/>
</dbReference>
<dbReference type="InterPro" id="IPR046947">
    <property type="entry name" value="LytR-like"/>
</dbReference>
<dbReference type="InterPro" id="IPR007492">
    <property type="entry name" value="LytTR_DNA-bd_dom"/>
</dbReference>
<dbReference type="PANTHER" id="PTHR37299:SF2">
    <property type="entry name" value="HTH LYTTR-TYPE DOMAIN-CONTAINING PROTEIN"/>
    <property type="match status" value="1"/>
</dbReference>
<dbReference type="PANTHER" id="PTHR37299">
    <property type="entry name" value="TRANSCRIPTIONAL REGULATOR-RELATED"/>
    <property type="match status" value="1"/>
</dbReference>
<dbReference type="Pfam" id="PF04397">
    <property type="entry name" value="LytTR"/>
    <property type="match status" value="1"/>
</dbReference>
<dbReference type="SMART" id="SM00850">
    <property type="entry name" value="LytTR"/>
    <property type="match status" value="1"/>
</dbReference>
<dbReference type="PROSITE" id="PS50930">
    <property type="entry name" value="HTH_LYTTR"/>
    <property type="match status" value="1"/>
</dbReference>
<proteinExistence type="predicted"/>
<gene>
    <name type="ordered locus">SAV2363</name>
</gene>
<comment type="subcellular location">
    <subcellularLocation>
        <location evidence="2">Cytoplasm</location>
    </subcellularLocation>
</comment>